<gene>
    <name evidence="1" type="primary">ilvD</name>
    <name type="ordered locus">Hhal_0179</name>
</gene>
<comment type="function">
    <text evidence="1">Functions in the biosynthesis of branched-chain amino acids. Catalyzes the dehydration of (2R,3R)-2,3-dihydroxy-3-methylpentanoate (2,3-dihydroxy-3-methylvalerate) into 2-oxo-3-methylpentanoate (2-oxo-3-methylvalerate) and of (2R)-2,3-dihydroxy-3-methylbutanoate (2,3-dihydroxyisovalerate) into 2-oxo-3-methylbutanoate (2-oxoisovalerate), the penultimate precursor to L-isoleucine and L-valine, respectively.</text>
</comment>
<comment type="catalytic activity">
    <reaction evidence="1">
        <text>(2R)-2,3-dihydroxy-3-methylbutanoate = 3-methyl-2-oxobutanoate + H2O</text>
        <dbReference type="Rhea" id="RHEA:24809"/>
        <dbReference type="ChEBI" id="CHEBI:11851"/>
        <dbReference type="ChEBI" id="CHEBI:15377"/>
        <dbReference type="ChEBI" id="CHEBI:49072"/>
        <dbReference type="EC" id="4.2.1.9"/>
    </reaction>
    <physiologicalReaction direction="left-to-right" evidence="1">
        <dbReference type="Rhea" id="RHEA:24810"/>
    </physiologicalReaction>
</comment>
<comment type="catalytic activity">
    <reaction evidence="1">
        <text>(2R,3R)-2,3-dihydroxy-3-methylpentanoate = (S)-3-methyl-2-oxopentanoate + H2O</text>
        <dbReference type="Rhea" id="RHEA:27694"/>
        <dbReference type="ChEBI" id="CHEBI:15377"/>
        <dbReference type="ChEBI" id="CHEBI:35146"/>
        <dbReference type="ChEBI" id="CHEBI:49258"/>
        <dbReference type="EC" id="4.2.1.9"/>
    </reaction>
    <physiologicalReaction direction="left-to-right" evidence="1">
        <dbReference type="Rhea" id="RHEA:27695"/>
    </physiologicalReaction>
</comment>
<comment type="cofactor">
    <cofactor evidence="1">
        <name>[2Fe-2S] cluster</name>
        <dbReference type="ChEBI" id="CHEBI:190135"/>
    </cofactor>
    <text evidence="1">Binds 1 [2Fe-2S] cluster per subunit. This cluster acts as a Lewis acid cofactor.</text>
</comment>
<comment type="cofactor">
    <cofactor evidence="1">
        <name>Mg(2+)</name>
        <dbReference type="ChEBI" id="CHEBI:18420"/>
    </cofactor>
</comment>
<comment type="pathway">
    <text evidence="1">Amino-acid biosynthesis; L-isoleucine biosynthesis; L-isoleucine from 2-oxobutanoate: step 3/4.</text>
</comment>
<comment type="pathway">
    <text evidence="1">Amino-acid biosynthesis; L-valine biosynthesis; L-valine from pyruvate: step 3/4.</text>
</comment>
<comment type="subunit">
    <text evidence="1">Homodimer.</text>
</comment>
<comment type="similarity">
    <text evidence="1">Belongs to the IlvD/Edd family.</text>
</comment>
<protein>
    <recommendedName>
        <fullName evidence="1">Dihydroxy-acid dehydratase</fullName>
        <shortName evidence="1">DAD</shortName>
        <ecNumber evidence="1">4.2.1.9</ecNumber>
    </recommendedName>
</protein>
<evidence type="ECO:0000255" key="1">
    <source>
        <dbReference type="HAMAP-Rule" id="MF_00012"/>
    </source>
</evidence>
<sequence length="565" mass="59978">MADNRRSRVITQGVARTPNRAMLRAVGFRDEDFEKPIIGVGNAHSTITPCNVGIGAMARRAEEALREVGAMPMKFGTITVSDGITMGTEGMKYSLVSREVIADSIETVGGGQRMDGMLATGGCDKNMPGAMMALARLDIPGIFVYGGTIKPGHYKGEDLTVVSAFEAVGQYNAGNLSEADLKGVEENACPGAGACGGMFTANTMSSAFEAMGMSLMGSSTVSAEDDEARDVAAEASRVLMDAVHHDRRPSSILTREAFENAFAVVMALGGSTNAVLHLLAIANTAEVPFDLDDVERIRRKVPVLCDLKPSGRFVTSQFHEVGGTPQVMRILLEQGLLHGHCQTITGQTIEALIGHLPPEPPADQEIIMPFDRPLYPEGHLAILRGNLAEEGAVAKVSGIQQRRISGPARVFDSEEECLEAILADGVQAGDVVIVRYEGPKGGPGMREMLAPTSAIIGKGLGDAVGLITDGRFSGGTYGMVVGHVAPEAYDGGTIALIAEGDTVTIDADQNLLQVEVDDAELERRRSQWQVPRPRYRRGVLGKYARLAASASRGAVTDADLFPEQE</sequence>
<dbReference type="EC" id="4.2.1.9" evidence="1"/>
<dbReference type="EMBL" id="CP000544">
    <property type="protein sequence ID" value="ABM60973.1"/>
    <property type="molecule type" value="Genomic_DNA"/>
</dbReference>
<dbReference type="RefSeq" id="WP_011812996.1">
    <property type="nucleotide sequence ID" value="NC_008789.1"/>
</dbReference>
<dbReference type="SMR" id="A1WTG1"/>
<dbReference type="STRING" id="349124.Hhal_0179"/>
<dbReference type="KEGG" id="hha:Hhal_0179"/>
<dbReference type="eggNOG" id="COG0129">
    <property type="taxonomic scope" value="Bacteria"/>
</dbReference>
<dbReference type="HOGENOM" id="CLU_014271_4_1_6"/>
<dbReference type="OrthoDB" id="9807077at2"/>
<dbReference type="UniPathway" id="UPA00047">
    <property type="reaction ID" value="UER00057"/>
</dbReference>
<dbReference type="UniPathway" id="UPA00049">
    <property type="reaction ID" value="UER00061"/>
</dbReference>
<dbReference type="Proteomes" id="UP000000647">
    <property type="component" value="Chromosome"/>
</dbReference>
<dbReference type="GO" id="GO:0051537">
    <property type="term" value="F:2 iron, 2 sulfur cluster binding"/>
    <property type="evidence" value="ECO:0007669"/>
    <property type="project" value="UniProtKB-UniRule"/>
</dbReference>
<dbReference type="GO" id="GO:0004160">
    <property type="term" value="F:dihydroxy-acid dehydratase activity"/>
    <property type="evidence" value="ECO:0007669"/>
    <property type="project" value="UniProtKB-UniRule"/>
</dbReference>
<dbReference type="GO" id="GO:0000287">
    <property type="term" value="F:magnesium ion binding"/>
    <property type="evidence" value="ECO:0007669"/>
    <property type="project" value="UniProtKB-UniRule"/>
</dbReference>
<dbReference type="GO" id="GO:0009097">
    <property type="term" value="P:isoleucine biosynthetic process"/>
    <property type="evidence" value="ECO:0007669"/>
    <property type="project" value="UniProtKB-UniRule"/>
</dbReference>
<dbReference type="GO" id="GO:0009099">
    <property type="term" value="P:L-valine biosynthetic process"/>
    <property type="evidence" value="ECO:0007669"/>
    <property type="project" value="UniProtKB-UniRule"/>
</dbReference>
<dbReference type="FunFam" id="3.50.30.80:FF:000001">
    <property type="entry name" value="Dihydroxy-acid dehydratase"/>
    <property type="match status" value="1"/>
</dbReference>
<dbReference type="Gene3D" id="3.50.30.80">
    <property type="entry name" value="IlvD/EDD C-terminal domain-like"/>
    <property type="match status" value="1"/>
</dbReference>
<dbReference type="HAMAP" id="MF_00012">
    <property type="entry name" value="IlvD"/>
    <property type="match status" value="1"/>
</dbReference>
<dbReference type="InterPro" id="IPR050165">
    <property type="entry name" value="DHAD_IlvD/Edd"/>
</dbReference>
<dbReference type="InterPro" id="IPR042096">
    <property type="entry name" value="Dihydro-acid_dehy_C"/>
</dbReference>
<dbReference type="InterPro" id="IPR004404">
    <property type="entry name" value="DihydroxyA_deHydtase"/>
</dbReference>
<dbReference type="InterPro" id="IPR020558">
    <property type="entry name" value="DiOHA_6PGluconate_deHydtase_CS"/>
</dbReference>
<dbReference type="InterPro" id="IPR056740">
    <property type="entry name" value="ILV_EDD_C"/>
</dbReference>
<dbReference type="InterPro" id="IPR000581">
    <property type="entry name" value="ILV_EDD_N"/>
</dbReference>
<dbReference type="InterPro" id="IPR037237">
    <property type="entry name" value="IlvD/EDD_N"/>
</dbReference>
<dbReference type="NCBIfam" id="TIGR00110">
    <property type="entry name" value="ilvD"/>
    <property type="match status" value="1"/>
</dbReference>
<dbReference type="NCBIfam" id="NF002068">
    <property type="entry name" value="PRK00911.1"/>
    <property type="match status" value="1"/>
</dbReference>
<dbReference type="PANTHER" id="PTHR21000">
    <property type="entry name" value="DIHYDROXY-ACID DEHYDRATASE DAD"/>
    <property type="match status" value="1"/>
</dbReference>
<dbReference type="PANTHER" id="PTHR21000:SF5">
    <property type="entry name" value="DIHYDROXY-ACID DEHYDRATASE, MITOCHONDRIAL"/>
    <property type="match status" value="1"/>
</dbReference>
<dbReference type="Pfam" id="PF24877">
    <property type="entry name" value="ILV_EDD_C"/>
    <property type="match status" value="1"/>
</dbReference>
<dbReference type="Pfam" id="PF00920">
    <property type="entry name" value="ILVD_EDD_N"/>
    <property type="match status" value="1"/>
</dbReference>
<dbReference type="SUPFAM" id="SSF143975">
    <property type="entry name" value="IlvD/EDD N-terminal domain-like"/>
    <property type="match status" value="1"/>
</dbReference>
<dbReference type="SUPFAM" id="SSF52016">
    <property type="entry name" value="LeuD/IlvD-like"/>
    <property type="match status" value="1"/>
</dbReference>
<dbReference type="PROSITE" id="PS00886">
    <property type="entry name" value="ILVD_EDD_1"/>
    <property type="match status" value="1"/>
</dbReference>
<dbReference type="PROSITE" id="PS00887">
    <property type="entry name" value="ILVD_EDD_2"/>
    <property type="match status" value="1"/>
</dbReference>
<reference key="1">
    <citation type="submission" date="2006-12" db="EMBL/GenBank/DDBJ databases">
        <title>Complete sequence of Halorhodospira halophila SL1.</title>
        <authorList>
            <consortium name="US DOE Joint Genome Institute"/>
            <person name="Copeland A."/>
            <person name="Lucas S."/>
            <person name="Lapidus A."/>
            <person name="Barry K."/>
            <person name="Detter J.C."/>
            <person name="Glavina del Rio T."/>
            <person name="Hammon N."/>
            <person name="Israni S."/>
            <person name="Dalin E."/>
            <person name="Tice H."/>
            <person name="Pitluck S."/>
            <person name="Saunders E."/>
            <person name="Brettin T."/>
            <person name="Bruce D."/>
            <person name="Han C."/>
            <person name="Tapia R."/>
            <person name="Schmutz J."/>
            <person name="Larimer F."/>
            <person name="Land M."/>
            <person name="Hauser L."/>
            <person name="Kyrpides N."/>
            <person name="Mikhailova N."/>
            <person name="Hoff W."/>
            <person name="Richardson P."/>
        </authorList>
    </citation>
    <scope>NUCLEOTIDE SEQUENCE [LARGE SCALE GENOMIC DNA]</scope>
    <source>
        <strain>DSM 244 / SL1</strain>
    </source>
</reference>
<name>ILVD_HALHL</name>
<accession>A1WTG1</accession>
<keyword id="KW-0001">2Fe-2S</keyword>
<keyword id="KW-0028">Amino-acid biosynthesis</keyword>
<keyword id="KW-0100">Branched-chain amino acid biosynthesis</keyword>
<keyword id="KW-0408">Iron</keyword>
<keyword id="KW-0411">Iron-sulfur</keyword>
<keyword id="KW-0456">Lyase</keyword>
<keyword id="KW-0460">Magnesium</keyword>
<keyword id="KW-0479">Metal-binding</keyword>
<keyword id="KW-1185">Reference proteome</keyword>
<proteinExistence type="inferred from homology"/>
<feature type="chain" id="PRO_1000000991" description="Dihydroxy-acid dehydratase">
    <location>
        <begin position="1"/>
        <end position="565"/>
    </location>
</feature>
<feature type="active site" description="Proton acceptor" evidence="1">
    <location>
        <position position="473"/>
    </location>
</feature>
<feature type="binding site" evidence="1">
    <location>
        <position position="50"/>
    </location>
    <ligand>
        <name>[2Fe-2S] cluster</name>
        <dbReference type="ChEBI" id="CHEBI:190135"/>
    </ligand>
</feature>
<feature type="binding site" evidence="1">
    <location>
        <position position="82"/>
    </location>
    <ligand>
        <name>Mg(2+)</name>
        <dbReference type="ChEBI" id="CHEBI:18420"/>
    </ligand>
</feature>
<feature type="binding site" evidence="1">
    <location>
        <position position="123"/>
    </location>
    <ligand>
        <name>[2Fe-2S] cluster</name>
        <dbReference type="ChEBI" id="CHEBI:190135"/>
    </ligand>
</feature>
<feature type="binding site" evidence="1">
    <location>
        <position position="124"/>
    </location>
    <ligand>
        <name>Mg(2+)</name>
        <dbReference type="ChEBI" id="CHEBI:18420"/>
    </ligand>
</feature>
<feature type="binding site" description="via carbamate group" evidence="1">
    <location>
        <position position="125"/>
    </location>
    <ligand>
        <name>Mg(2+)</name>
        <dbReference type="ChEBI" id="CHEBI:18420"/>
    </ligand>
</feature>
<feature type="binding site" evidence="1">
    <location>
        <position position="195"/>
    </location>
    <ligand>
        <name>[2Fe-2S] cluster</name>
        <dbReference type="ChEBI" id="CHEBI:190135"/>
    </ligand>
</feature>
<feature type="binding site" evidence="1">
    <location>
        <position position="447"/>
    </location>
    <ligand>
        <name>Mg(2+)</name>
        <dbReference type="ChEBI" id="CHEBI:18420"/>
    </ligand>
</feature>
<feature type="modified residue" description="N6-carboxylysine" evidence="1">
    <location>
        <position position="125"/>
    </location>
</feature>
<organism>
    <name type="scientific">Halorhodospira halophila (strain DSM 244 / SL1)</name>
    <name type="common">Ectothiorhodospira halophila (strain DSM 244 / SL1)</name>
    <dbReference type="NCBI Taxonomy" id="349124"/>
    <lineage>
        <taxon>Bacteria</taxon>
        <taxon>Pseudomonadati</taxon>
        <taxon>Pseudomonadota</taxon>
        <taxon>Gammaproteobacteria</taxon>
        <taxon>Chromatiales</taxon>
        <taxon>Ectothiorhodospiraceae</taxon>
        <taxon>Halorhodospira</taxon>
    </lineage>
</organism>